<name>DCUP_PECCP</name>
<organism>
    <name type="scientific">Pectobacterium carotovorum subsp. carotovorum (strain PC1)</name>
    <dbReference type="NCBI Taxonomy" id="561230"/>
    <lineage>
        <taxon>Bacteria</taxon>
        <taxon>Pseudomonadati</taxon>
        <taxon>Pseudomonadota</taxon>
        <taxon>Gammaproteobacteria</taxon>
        <taxon>Enterobacterales</taxon>
        <taxon>Pectobacteriaceae</taxon>
        <taxon>Pectobacterium</taxon>
    </lineage>
</organism>
<dbReference type="EC" id="4.1.1.37" evidence="1"/>
<dbReference type="EMBL" id="CP001657">
    <property type="protein sequence ID" value="ACT11279.1"/>
    <property type="molecule type" value="Genomic_DNA"/>
</dbReference>
<dbReference type="RefSeq" id="WP_012772948.1">
    <property type="nucleotide sequence ID" value="NC_012917.1"/>
</dbReference>
<dbReference type="SMR" id="C6DHS9"/>
<dbReference type="STRING" id="561230.PC1_0219"/>
<dbReference type="KEGG" id="pct:PC1_0219"/>
<dbReference type="eggNOG" id="COG0407">
    <property type="taxonomic scope" value="Bacteria"/>
</dbReference>
<dbReference type="HOGENOM" id="CLU_040933_0_0_6"/>
<dbReference type="OrthoDB" id="9806656at2"/>
<dbReference type="UniPathway" id="UPA00251">
    <property type="reaction ID" value="UER00321"/>
</dbReference>
<dbReference type="Proteomes" id="UP000002736">
    <property type="component" value="Chromosome"/>
</dbReference>
<dbReference type="GO" id="GO:0005829">
    <property type="term" value="C:cytosol"/>
    <property type="evidence" value="ECO:0007669"/>
    <property type="project" value="TreeGrafter"/>
</dbReference>
<dbReference type="GO" id="GO:0004853">
    <property type="term" value="F:uroporphyrinogen decarboxylase activity"/>
    <property type="evidence" value="ECO:0007669"/>
    <property type="project" value="UniProtKB-UniRule"/>
</dbReference>
<dbReference type="GO" id="GO:0019353">
    <property type="term" value="P:protoporphyrinogen IX biosynthetic process from glutamate"/>
    <property type="evidence" value="ECO:0007669"/>
    <property type="project" value="TreeGrafter"/>
</dbReference>
<dbReference type="CDD" id="cd00717">
    <property type="entry name" value="URO-D"/>
    <property type="match status" value="1"/>
</dbReference>
<dbReference type="FunFam" id="3.20.20.210:FF:000001">
    <property type="entry name" value="Uroporphyrinogen decarboxylase"/>
    <property type="match status" value="1"/>
</dbReference>
<dbReference type="Gene3D" id="3.20.20.210">
    <property type="match status" value="1"/>
</dbReference>
<dbReference type="HAMAP" id="MF_00218">
    <property type="entry name" value="URO_D"/>
    <property type="match status" value="1"/>
</dbReference>
<dbReference type="InterPro" id="IPR038071">
    <property type="entry name" value="UROD/MetE-like_sf"/>
</dbReference>
<dbReference type="InterPro" id="IPR006361">
    <property type="entry name" value="Uroporphyrinogen_deCO2ase_HemE"/>
</dbReference>
<dbReference type="InterPro" id="IPR000257">
    <property type="entry name" value="Uroporphyrinogen_deCOase"/>
</dbReference>
<dbReference type="NCBIfam" id="TIGR01464">
    <property type="entry name" value="hemE"/>
    <property type="match status" value="1"/>
</dbReference>
<dbReference type="PANTHER" id="PTHR21091">
    <property type="entry name" value="METHYLTETRAHYDROFOLATE:HOMOCYSTEINE METHYLTRANSFERASE RELATED"/>
    <property type="match status" value="1"/>
</dbReference>
<dbReference type="PANTHER" id="PTHR21091:SF169">
    <property type="entry name" value="UROPORPHYRINOGEN DECARBOXYLASE"/>
    <property type="match status" value="1"/>
</dbReference>
<dbReference type="Pfam" id="PF01208">
    <property type="entry name" value="URO-D"/>
    <property type="match status" value="1"/>
</dbReference>
<dbReference type="SUPFAM" id="SSF51726">
    <property type="entry name" value="UROD/MetE-like"/>
    <property type="match status" value="1"/>
</dbReference>
<dbReference type="PROSITE" id="PS00906">
    <property type="entry name" value="UROD_1"/>
    <property type="match status" value="1"/>
</dbReference>
<dbReference type="PROSITE" id="PS00907">
    <property type="entry name" value="UROD_2"/>
    <property type="match status" value="1"/>
</dbReference>
<accession>C6DHS9</accession>
<proteinExistence type="inferred from homology"/>
<keyword id="KW-0963">Cytoplasm</keyword>
<keyword id="KW-0210">Decarboxylase</keyword>
<keyword id="KW-0456">Lyase</keyword>
<keyword id="KW-0627">Porphyrin biosynthesis</keyword>
<reference key="1">
    <citation type="submission" date="2009-07" db="EMBL/GenBank/DDBJ databases">
        <title>Complete sequence of Pectobacterium carotovorum subsp. carotovorum PC1.</title>
        <authorList>
            <consortium name="US DOE Joint Genome Institute"/>
            <person name="Lucas S."/>
            <person name="Copeland A."/>
            <person name="Lapidus A."/>
            <person name="Glavina del Rio T."/>
            <person name="Tice H."/>
            <person name="Bruce D."/>
            <person name="Goodwin L."/>
            <person name="Pitluck S."/>
            <person name="Munk A.C."/>
            <person name="Brettin T."/>
            <person name="Detter J.C."/>
            <person name="Han C."/>
            <person name="Tapia R."/>
            <person name="Larimer F."/>
            <person name="Land M."/>
            <person name="Hauser L."/>
            <person name="Kyrpides N."/>
            <person name="Mikhailova N."/>
            <person name="Balakrishnan V."/>
            <person name="Glasner J."/>
            <person name="Perna N.T."/>
        </authorList>
    </citation>
    <scope>NUCLEOTIDE SEQUENCE [LARGE SCALE GENOMIC DNA]</scope>
    <source>
        <strain>PC1</strain>
    </source>
</reference>
<gene>
    <name evidence="1" type="primary">hemE</name>
    <name type="ordered locus">PC1_0219</name>
</gene>
<protein>
    <recommendedName>
        <fullName evidence="1">Uroporphyrinogen decarboxylase</fullName>
        <shortName evidence="1">UPD</shortName>
        <shortName evidence="1">URO-D</shortName>
        <ecNumber evidence="1">4.1.1.37</ecNumber>
    </recommendedName>
</protein>
<sequence length="354" mass="39089">MTDLKNDRYLRALLRQPVDVTPVWMMRQAGRYLPEYKATRAQAGDFMSLCKNAELACEVTLQPLRRYALDAAILFSDILTIPDAMGLGLYFEAGEGPRFHSPITSHADVVNLPIPDPEQELGYVMNAVRTIRKNLAGEVPLIGFSGSPWTLATYMVEGGSSKAFTVIKKMMFAEPKTLHLLLDKLADSVILYLNAQIRAGAQAVMVFDTWGGALSGRDYKEFSLRYMHKIVDGLQRENEGRRVPVTLFTKGGGQWLEAMAETGCDALGLDWTSDIADARRRVGDKVALQGNMDPSMLYADPARIEQEVASILAGFGQGNGHVFNLGHGIHQDVPPEHAGVFVEAVHRLSRPYHA</sequence>
<evidence type="ECO:0000255" key="1">
    <source>
        <dbReference type="HAMAP-Rule" id="MF_00218"/>
    </source>
</evidence>
<comment type="function">
    <text evidence="1">Catalyzes the decarboxylation of four acetate groups of uroporphyrinogen-III to yield coproporphyrinogen-III.</text>
</comment>
<comment type="catalytic activity">
    <reaction evidence="1">
        <text>uroporphyrinogen III + 4 H(+) = coproporphyrinogen III + 4 CO2</text>
        <dbReference type="Rhea" id="RHEA:19865"/>
        <dbReference type="ChEBI" id="CHEBI:15378"/>
        <dbReference type="ChEBI" id="CHEBI:16526"/>
        <dbReference type="ChEBI" id="CHEBI:57308"/>
        <dbReference type="ChEBI" id="CHEBI:57309"/>
        <dbReference type="EC" id="4.1.1.37"/>
    </reaction>
</comment>
<comment type="pathway">
    <text evidence="1">Porphyrin-containing compound metabolism; protoporphyrin-IX biosynthesis; coproporphyrinogen-III from 5-aminolevulinate: step 4/4.</text>
</comment>
<comment type="subunit">
    <text evidence="1">Homodimer.</text>
</comment>
<comment type="subcellular location">
    <subcellularLocation>
        <location evidence="1">Cytoplasm</location>
    </subcellularLocation>
</comment>
<comment type="similarity">
    <text evidence="1">Belongs to the uroporphyrinogen decarboxylase family.</text>
</comment>
<feature type="chain" id="PRO_1000204236" description="Uroporphyrinogen decarboxylase">
    <location>
        <begin position="1"/>
        <end position="354"/>
    </location>
</feature>
<feature type="binding site" evidence="1">
    <location>
        <begin position="27"/>
        <end position="31"/>
    </location>
    <ligand>
        <name>substrate</name>
    </ligand>
</feature>
<feature type="binding site" evidence="1">
    <location>
        <position position="77"/>
    </location>
    <ligand>
        <name>substrate</name>
    </ligand>
</feature>
<feature type="binding site" evidence="1">
    <location>
        <position position="154"/>
    </location>
    <ligand>
        <name>substrate</name>
    </ligand>
</feature>
<feature type="binding site" evidence="1">
    <location>
        <position position="209"/>
    </location>
    <ligand>
        <name>substrate</name>
    </ligand>
</feature>
<feature type="binding site" evidence="1">
    <location>
        <position position="327"/>
    </location>
    <ligand>
        <name>substrate</name>
    </ligand>
</feature>
<feature type="site" description="Transition state stabilizer" evidence="1">
    <location>
        <position position="77"/>
    </location>
</feature>